<name>M1_I73A5</name>
<dbReference type="EMBL" id="X08092">
    <property type="protein sequence ID" value="CAA30890.1"/>
    <property type="molecule type" value="Genomic_RNA"/>
</dbReference>
<dbReference type="EMBL" id="X08090">
    <property type="protein sequence ID" value="CAA30886.1"/>
    <property type="molecule type" value="Genomic_RNA"/>
</dbReference>
<dbReference type="EMBL" id="CY009349">
    <property type="protein sequence ID" value="ABE12540.1"/>
    <property type="molecule type" value="Genomic_RNA"/>
</dbReference>
<dbReference type="PIR" id="S04054">
    <property type="entry name" value="S04054"/>
</dbReference>
<dbReference type="SMR" id="P63234"/>
<dbReference type="Proteomes" id="UP000133870">
    <property type="component" value="Genome"/>
</dbReference>
<dbReference type="GO" id="GO:0042025">
    <property type="term" value="C:host cell nucleus"/>
    <property type="evidence" value="ECO:0007669"/>
    <property type="project" value="UniProtKB-SubCell"/>
</dbReference>
<dbReference type="GO" id="GO:0016020">
    <property type="term" value="C:membrane"/>
    <property type="evidence" value="ECO:0007669"/>
    <property type="project" value="UniProtKB-KW"/>
</dbReference>
<dbReference type="GO" id="GO:0055036">
    <property type="term" value="C:virion membrane"/>
    <property type="evidence" value="ECO:0007669"/>
    <property type="project" value="UniProtKB-SubCell"/>
</dbReference>
<dbReference type="GO" id="GO:0003723">
    <property type="term" value="F:RNA binding"/>
    <property type="evidence" value="ECO:0007669"/>
    <property type="project" value="UniProtKB-UniRule"/>
</dbReference>
<dbReference type="GO" id="GO:0039660">
    <property type="term" value="F:structural constituent of virion"/>
    <property type="evidence" value="ECO:0007669"/>
    <property type="project" value="UniProtKB-UniRule"/>
</dbReference>
<dbReference type="GO" id="GO:0046761">
    <property type="term" value="P:viral budding from plasma membrane"/>
    <property type="evidence" value="ECO:0007669"/>
    <property type="project" value="UniProtKB-UniRule"/>
</dbReference>
<dbReference type="FunFam" id="1.10.10.180:FF:000001">
    <property type="entry name" value="Matrix protein 1"/>
    <property type="match status" value="1"/>
</dbReference>
<dbReference type="FunFam" id="1.20.91.10:FF:000001">
    <property type="entry name" value="Matrix protein 1"/>
    <property type="match status" value="1"/>
</dbReference>
<dbReference type="Gene3D" id="1.10.10.180">
    <property type="match status" value="1"/>
</dbReference>
<dbReference type="Gene3D" id="1.20.91.10">
    <property type="match status" value="1"/>
</dbReference>
<dbReference type="HAMAP" id="MF_04068">
    <property type="entry name" value="INFV_M1"/>
    <property type="match status" value="1"/>
</dbReference>
<dbReference type="InterPro" id="IPR036039">
    <property type="entry name" value="Flu_matrix_M1"/>
</dbReference>
<dbReference type="InterPro" id="IPR013188">
    <property type="entry name" value="Flu_matrix_M1_C"/>
</dbReference>
<dbReference type="InterPro" id="IPR001561">
    <property type="entry name" value="Flu_matrix_M1_N"/>
</dbReference>
<dbReference type="InterPro" id="IPR015423">
    <property type="entry name" value="Flu_matrix_M1_N_sub1"/>
</dbReference>
<dbReference type="InterPro" id="IPR015799">
    <property type="entry name" value="Flu_matrix_M1_N_sub2"/>
</dbReference>
<dbReference type="InterPro" id="IPR037533">
    <property type="entry name" value="INFV_M1"/>
</dbReference>
<dbReference type="Pfam" id="PF00598">
    <property type="entry name" value="Flu_M1"/>
    <property type="match status" value="1"/>
</dbReference>
<dbReference type="Pfam" id="PF08289">
    <property type="entry name" value="Flu_M1_C"/>
    <property type="match status" value="1"/>
</dbReference>
<dbReference type="SMART" id="SM00759">
    <property type="entry name" value="Flu_M1_C"/>
    <property type="match status" value="1"/>
</dbReference>
<dbReference type="SUPFAM" id="SSF48145">
    <property type="entry name" value="Influenza virus matrix protein M1"/>
    <property type="match status" value="1"/>
</dbReference>
<protein>
    <recommendedName>
        <fullName evidence="1">Matrix protein 1</fullName>
        <shortName evidence="1">M1</shortName>
    </recommendedName>
</protein>
<organismHost>
    <name type="scientific">Aves</name>
    <dbReference type="NCBI Taxonomy" id="8782"/>
</organismHost>
<organismHost>
    <name type="scientific">Cetacea</name>
    <name type="common">whales</name>
    <dbReference type="NCBI Taxonomy" id="9721"/>
</organismHost>
<organismHost>
    <name type="scientific">Homo sapiens</name>
    <name type="common">Human</name>
    <dbReference type="NCBI Taxonomy" id="9606"/>
</organismHost>
<organismHost>
    <name type="scientific">Phocidae</name>
    <name type="common">true seals</name>
    <dbReference type="NCBI Taxonomy" id="9709"/>
</organismHost>
<organismHost>
    <name type="scientific">Sus scrofa</name>
    <name type="common">Pig</name>
    <dbReference type="NCBI Taxonomy" id="9823"/>
</organismHost>
<gene>
    <name evidence="1" type="primary">M</name>
</gene>
<organism>
    <name type="scientific">Influenza A virus (strain A/Port Chalmers/1/1973 H3N2)</name>
    <dbReference type="NCBI Taxonomy" id="385624"/>
    <lineage>
        <taxon>Viruses</taxon>
        <taxon>Riboviria</taxon>
        <taxon>Orthornavirae</taxon>
        <taxon>Negarnaviricota</taxon>
        <taxon>Polyploviricotina</taxon>
        <taxon>Insthoviricetes</taxon>
        <taxon>Articulavirales</taxon>
        <taxon>Orthomyxoviridae</taxon>
        <taxon>Alphainfluenzavirus</taxon>
        <taxon>Alphainfluenzavirus influenzae</taxon>
        <taxon>Influenza A virus</taxon>
    </lineage>
</organism>
<accession>P63234</accession>
<accession>P03486</accession>
<accession>P10919</accession>
<accession>Q1PUD7</accession>
<feature type="chain" id="PRO_0000078863" description="Matrix protein 1">
    <location>
        <begin position="1"/>
        <end position="252"/>
    </location>
</feature>
<feature type="region of interest" description="Membrane-binding" evidence="1">
    <location>
        <begin position="1"/>
        <end position="164"/>
    </location>
</feature>
<feature type="region of interest" description="RNP-binding" evidence="1">
    <location>
        <begin position="165"/>
        <end position="252"/>
    </location>
</feature>
<feature type="short sequence motif" description="Nuclear localization signal" evidence="1">
    <location>
        <begin position="101"/>
        <end position="105"/>
    </location>
</feature>
<feature type="sequence variant" description="In mouse-adapted mutant.">
    <original>A</original>
    <variation>V</variation>
    <location>
        <position position="41"/>
    </location>
</feature>
<keyword id="KW-0025">Alternative splicing</keyword>
<keyword id="KW-1048">Host nucleus</keyword>
<keyword id="KW-0472">Membrane</keyword>
<keyword id="KW-0694">RNA-binding</keyword>
<keyword id="KW-0468">Viral matrix protein</keyword>
<keyword id="KW-0946">Virion</keyword>
<sequence length="252" mass="27804">MSLLTEVETYVLSIVPSGPLKAEIAQRLEDVFAGKNTDLEALMEWLKTRPILSPLTKGILGFVFTLTVPSERGLQRRRFVQNALNGNGDPNNMDRAVKLYRKLKREITFHGAKEIALSYSAGALASCMGLIYNRMGAVTTEVAFGLVCATCEQIADSQHRSHRQMVATTNPLIRHENRMVLASTTAKAMEQMAGSSEQAAEAMEVASQARQMVQAMRAIGTHPSSSAGLKDDLLENLQAYQKRMGVQMQRFK</sequence>
<reference key="1">
    <citation type="journal article" date="1989" name="Nucleic Acids Res.">
        <title>Nucleotide sequences of influenza A virus RNA segment 7: a comparison of five isolates.</title>
        <authorList>
            <person name="Zebedee S.L."/>
            <person name="Lamb R.A."/>
        </authorList>
    </citation>
    <scope>NUCLEOTIDE SEQUENCE [GENOMIC RNA]</scope>
</reference>
<reference key="2">
    <citation type="submission" date="2006-04" db="EMBL/GenBank/DDBJ databases">
        <title>The NIAID influenza genome sequencing project.</title>
        <authorList>
            <person name="Spiro D."/>
            <person name="Ghedin E."/>
            <person name="Sengamalay N."/>
            <person name="Halpin R."/>
            <person name="Boyne A."/>
            <person name="Zaborsky J."/>
            <person name="Feldblyum T."/>
            <person name="Subbu V."/>
            <person name="Sparenborg J."/>
            <person name="Shumway M."/>
            <person name="Sitz J."/>
            <person name="Katzel D."/>
            <person name="Koo H."/>
            <person name="Salzberg S.L."/>
            <person name="Griesemer S."/>
            <person name="St George K."/>
            <person name="Bennett R."/>
            <person name="Taylor J."/>
            <person name="Bennink J.R."/>
            <person name="Yewdell J.W."/>
            <person name="Bao Y."/>
            <person name="Bolotov P."/>
            <person name="Dernovoy D."/>
            <person name="Kiryutin B."/>
            <person name="Lipman D.J."/>
            <person name="Tatusova T."/>
        </authorList>
    </citation>
    <scope>NUCLEOTIDE SEQUENCE [GENOMIC RNA]</scope>
</reference>
<proteinExistence type="inferred from homology"/>
<evidence type="ECO:0000255" key="1">
    <source>
        <dbReference type="HAMAP-Rule" id="MF_04068"/>
    </source>
</evidence>
<comment type="function">
    <text evidence="1">Plays critical roles in virus replication, from virus entry and uncoating to assembly and budding of the virus particle. M1 binding to ribonucleocapsids (RNPs) in nucleus seems to inhibit viral transcription. Interaction of viral NEP with M1-RNP is thought to promote nuclear export of the complex, which is targeted to the virion assembly site at the apical plasma membrane in polarized epithelial cells. Interactions with NA and HA may bring M1, a non-raft-associated protein, into lipid rafts. Forms a continuous shell on the inner side of the lipid bilayer in virion, where it binds the RNP. During virus entry into cell, the M2 ion channel acidifies the internal virion core, inducing M1 dissociation from the RNP. M1-free RNPs are transported to the nucleus, where viral transcription and replication can take place.</text>
</comment>
<comment type="function">
    <text evidence="1">Determines the virion's shape: spherical or filamentous. Clinical isolates of influenza are characterized by the presence of significant proportion of filamentous virions, whereas after multiple passage on eggs or cell culture, virions have only spherical morphology. Filamentous virions are thought to be important to infect neighboring cells, and spherical virions more suited to spread through aerosol between hosts organisms.</text>
</comment>
<comment type="subunit">
    <text evidence="1">Homodimer and homomultimer. Interacts with NEP. Binds ribonucleocapsid by both interacting with genomic RNA and NP protein. May interact with HA and NA. Cannot bind NP without genomic RNA.</text>
</comment>
<comment type="subcellular location">
    <subcellularLocation>
        <location evidence="1">Virion membrane</location>
        <topology evidence="1">Peripheral membrane protein</topology>
        <orientation evidence="1">Cytoplasmic side</orientation>
    </subcellularLocation>
    <subcellularLocation>
        <location evidence="1">Host nucleus</location>
    </subcellularLocation>
</comment>
<comment type="alternative products">
    <event type="alternative splicing"/>
    <isoform>
        <id>P63234-1</id>
        <id>P03486-1</id>
        <name>M1</name>
        <sequence type="displayed"/>
    </isoform>
    <isoform>
        <id>P63232-1</id>
        <id>P03490-1</id>
        <name>M2</name>
        <sequence type="external"/>
    </isoform>
    <text>Only the first 9 residues are shared by the 2 isoforms.</text>
</comment>
<comment type="miscellaneous">
    <text evidence="1">Most abundant protein in virion. When expressed alone can form virus-like particles in transfected cells.</text>
</comment>
<comment type="similarity">
    <text evidence="1">Belongs to the influenza viruses Matrix protein M1 family.</text>
</comment>